<evidence type="ECO:0000250" key="1"/>
<evidence type="ECO:0000255" key="2">
    <source>
        <dbReference type="PROSITE-ProRule" id="PRU01230"/>
    </source>
</evidence>
<evidence type="ECO:0000269" key="3">
    <source>
    </source>
</evidence>
<evidence type="ECO:0000305" key="4"/>
<sequence>MARSLAWRCCPWCLSEDEKAAARVDQEITRLLLEHRRQVRGELKLLLLGTGESGKSTFIKQMRIIHGAGYSEEDRKGFRPLVFQNIFLSVQAIIEAMDRLQIPYSRPESKLHASLVMSQDPYKVNTFETRYALAVQSLWRDAGVRACYERRREFHLLDSAVYYLSHLERIAEEGYVPTAQDVLRSRMPTTGINEYCFSVQKTNLRIVDVGGQKSERRKWIHCFEDVTALIFLASLSEYDQCLEENGQENRMQESLALFGTVLALPWFRATSVILFLNKTDILEDKVRTSHLATYFPGFRGPPQDPEAAKRFILELYTRVYAGAAAGPDGASKGPRSRRLFSHYTCATDTQNIRKVFKDVRDSVLARYLDEINLL</sequence>
<name>GNA15_RABIT</name>
<accession>Q9TU29</accession>
<dbReference type="EMBL" id="AF169627">
    <property type="protein sequence ID" value="AAF06740.1"/>
    <property type="molecule type" value="mRNA"/>
</dbReference>
<dbReference type="RefSeq" id="NP_001076184.1">
    <property type="nucleotide sequence ID" value="NM_001082715.1"/>
</dbReference>
<dbReference type="SMR" id="Q9TU29"/>
<dbReference type="FunCoup" id="Q9TU29">
    <property type="interactions" value="70"/>
</dbReference>
<dbReference type="GeneID" id="100009469"/>
<dbReference type="CTD" id="2769"/>
<dbReference type="InParanoid" id="Q9TU29"/>
<dbReference type="Proteomes" id="UP000001811">
    <property type="component" value="Unplaced"/>
</dbReference>
<dbReference type="GO" id="GO:0005737">
    <property type="term" value="C:cytoplasm"/>
    <property type="evidence" value="ECO:0007669"/>
    <property type="project" value="TreeGrafter"/>
</dbReference>
<dbReference type="GO" id="GO:0005834">
    <property type="term" value="C:heterotrimeric G-protein complex"/>
    <property type="evidence" value="ECO:0000303"/>
    <property type="project" value="UniProtKB"/>
</dbReference>
<dbReference type="GO" id="GO:0001664">
    <property type="term" value="F:G protein-coupled receptor binding"/>
    <property type="evidence" value="ECO:0000314"/>
    <property type="project" value="UniProtKB"/>
</dbReference>
<dbReference type="GO" id="GO:0031683">
    <property type="term" value="F:G-protein beta/gamma-subunit complex binding"/>
    <property type="evidence" value="ECO:0007669"/>
    <property type="project" value="InterPro"/>
</dbReference>
<dbReference type="GO" id="GO:0005525">
    <property type="term" value="F:GTP binding"/>
    <property type="evidence" value="ECO:0007669"/>
    <property type="project" value="UniProtKB-KW"/>
</dbReference>
<dbReference type="GO" id="GO:0003924">
    <property type="term" value="F:GTPase activity"/>
    <property type="evidence" value="ECO:0007669"/>
    <property type="project" value="InterPro"/>
</dbReference>
<dbReference type="GO" id="GO:0046872">
    <property type="term" value="F:metal ion binding"/>
    <property type="evidence" value="ECO:0007669"/>
    <property type="project" value="UniProtKB-KW"/>
</dbReference>
<dbReference type="GO" id="GO:0007188">
    <property type="term" value="P:adenylate cyclase-modulating G protein-coupled receptor signaling pathway"/>
    <property type="evidence" value="ECO:0007669"/>
    <property type="project" value="TreeGrafter"/>
</dbReference>
<dbReference type="GO" id="GO:0019722">
    <property type="term" value="P:calcium-mediated signaling"/>
    <property type="evidence" value="ECO:0000353"/>
    <property type="project" value="UniProtKB"/>
</dbReference>
<dbReference type="GO" id="GO:0060158">
    <property type="term" value="P:phospholipase C-activating dopamine receptor signaling pathway"/>
    <property type="evidence" value="ECO:0007669"/>
    <property type="project" value="TreeGrafter"/>
</dbReference>
<dbReference type="CDD" id="cd00066">
    <property type="entry name" value="G-alpha"/>
    <property type="match status" value="1"/>
</dbReference>
<dbReference type="FunFam" id="1.10.400.10:FF:000002">
    <property type="entry name" value="guanine nucleotide-binding protein G(Q) subunit alpha"/>
    <property type="match status" value="1"/>
</dbReference>
<dbReference type="FunFam" id="3.40.50.300:FF:000692">
    <property type="entry name" value="Guanine nucleotide-binding protein subunit alpha"/>
    <property type="match status" value="1"/>
</dbReference>
<dbReference type="FunFam" id="3.40.50.300:FF:000985">
    <property type="entry name" value="Guanine nucleotide-binding protein subunit alpha-15"/>
    <property type="match status" value="1"/>
</dbReference>
<dbReference type="Gene3D" id="1.10.400.10">
    <property type="entry name" value="GI Alpha 1, domain 2-like"/>
    <property type="match status" value="1"/>
</dbReference>
<dbReference type="Gene3D" id="3.40.50.300">
    <property type="entry name" value="P-loop containing nucleotide triphosphate hydrolases"/>
    <property type="match status" value="1"/>
</dbReference>
<dbReference type="InterPro" id="IPR000654">
    <property type="entry name" value="Gprotein_alpha_Q"/>
</dbReference>
<dbReference type="InterPro" id="IPR001019">
    <property type="entry name" value="Gprotein_alpha_su"/>
</dbReference>
<dbReference type="InterPro" id="IPR011025">
    <property type="entry name" value="GproteinA_insert"/>
</dbReference>
<dbReference type="InterPro" id="IPR027417">
    <property type="entry name" value="P-loop_NTPase"/>
</dbReference>
<dbReference type="PANTHER" id="PTHR10218">
    <property type="entry name" value="GTP-BINDING PROTEIN ALPHA SUBUNIT"/>
    <property type="match status" value="1"/>
</dbReference>
<dbReference type="PANTHER" id="PTHR10218:SF217">
    <property type="entry name" value="GUANINE NUCLEOTIDE-BINDING PROTEIN SUBUNIT ALPHA-15"/>
    <property type="match status" value="1"/>
</dbReference>
<dbReference type="Pfam" id="PF00503">
    <property type="entry name" value="G-alpha"/>
    <property type="match status" value="1"/>
</dbReference>
<dbReference type="PRINTS" id="PR00318">
    <property type="entry name" value="GPROTEINA"/>
</dbReference>
<dbReference type="PRINTS" id="PR00442">
    <property type="entry name" value="GPROTEINAQ"/>
</dbReference>
<dbReference type="SMART" id="SM00275">
    <property type="entry name" value="G_alpha"/>
    <property type="match status" value="1"/>
</dbReference>
<dbReference type="SUPFAM" id="SSF52540">
    <property type="entry name" value="P-loop containing nucleoside triphosphate hydrolases"/>
    <property type="match status" value="1"/>
</dbReference>
<dbReference type="SUPFAM" id="SSF47895">
    <property type="entry name" value="Transducin (alpha subunit), insertion domain"/>
    <property type="match status" value="1"/>
</dbReference>
<dbReference type="PROSITE" id="PS51882">
    <property type="entry name" value="G_ALPHA"/>
    <property type="match status" value="1"/>
</dbReference>
<gene>
    <name type="primary">GNA15</name>
</gene>
<keyword id="KW-0342">GTP-binding</keyword>
<keyword id="KW-0460">Magnesium</keyword>
<keyword id="KW-0479">Metal-binding</keyword>
<keyword id="KW-0547">Nucleotide-binding</keyword>
<keyword id="KW-1185">Reference proteome</keyword>
<keyword id="KW-0807">Transducer</keyword>
<comment type="function">
    <text evidence="3">Guanine nucleotide-binding proteins (G proteins) are involved as modulators or transducers in various transmembrane signaling systems.</text>
</comment>
<comment type="subunit">
    <text>G proteins are composed of 3 units; alpha, beta and gamma. The alpha chain contains the guanine nucleotide binding site.</text>
</comment>
<comment type="similarity">
    <text evidence="4">Belongs to the G-alpha family. G(q) subfamily.</text>
</comment>
<proteinExistence type="evidence at transcript level"/>
<feature type="chain" id="PRO_0000203757" description="Guanine nucleotide-binding protein subunit alpha-15">
    <location>
        <begin position="1"/>
        <end position="374"/>
    </location>
</feature>
<feature type="domain" description="G-alpha" evidence="2">
    <location>
        <begin position="41"/>
        <end position="374"/>
    </location>
</feature>
<feature type="region of interest" description="G1 motif" evidence="2">
    <location>
        <begin position="44"/>
        <end position="57"/>
    </location>
</feature>
<feature type="region of interest" description="G2 motif" evidence="2">
    <location>
        <begin position="181"/>
        <end position="189"/>
    </location>
</feature>
<feature type="region of interest" description="G3 motif" evidence="2">
    <location>
        <begin position="204"/>
        <end position="213"/>
    </location>
</feature>
<feature type="region of interest" description="G4 motif" evidence="2">
    <location>
        <begin position="273"/>
        <end position="280"/>
    </location>
</feature>
<feature type="region of interest" description="G5 motif" evidence="2">
    <location>
        <begin position="344"/>
        <end position="349"/>
    </location>
</feature>
<feature type="binding site" evidence="1">
    <location>
        <begin position="49"/>
        <end position="56"/>
    </location>
    <ligand>
        <name>GTP</name>
        <dbReference type="ChEBI" id="CHEBI:37565"/>
    </ligand>
</feature>
<feature type="binding site" evidence="1">
    <location>
        <position position="56"/>
    </location>
    <ligand>
        <name>Mg(2+)</name>
        <dbReference type="ChEBI" id="CHEBI:18420"/>
    </ligand>
</feature>
<feature type="binding site" evidence="1">
    <location>
        <begin position="183"/>
        <end position="189"/>
    </location>
    <ligand>
        <name>GTP</name>
        <dbReference type="ChEBI" id="CHEBI:37565"/>
    </ligand>
</feature>
<feature type="binding site" evidence="1">
    <location>
        <position position="189"/>
    </location>
    <ligand>
        <name>Mg(2+)</name>
        <dbReference type="ChEBI" id="CHEBI:18420"/>
    </ligand>
</feature>
<feature type="binding site" evidence="1">
    <location>
        <begin position="208"/>
        <end position="212"/>
    </location>
    <ligand>
        <name>GTP</name>
        <dbReference type="ChEBI" id="CHEBI:37565"/>
    </ligand>
</feature>
<feature type="binding site" evidence="1">
    <location>
        <begin position="277"/>
        <end position="280"/>
    </location>
    <ligand>
        <name>GTP</name>
        <dbReference type="ChEBI" id="CHEBI:37565"/>
    </ligand>
</feature>
<feature type="binding site" evidence="1">
    <location>
        <position position="346"/>
    </location>
    <ligand>
        <name>GTP</name>
        <dbReference type="ChEBI" id="CHEBI:37565"/>
    </ligand>
</feature>
<organism>
    <name type="scientific">Oryctolagus cuniculus</name>
    <name type="common">Rabbit</name>
    <dbReference type="NCBI Taxonomy" id="9986"/>
    <lineage>
        <taxon>Eukaryota</taxon>
        <taxon>Metazoa</taxon>
        <taxon>Chordata</taxon>
        <taxon>Craniata</taxon>
        <taxon>Vertebrata</taxon>
        <taxon>Euteleostomi</taxon>
        <taxon>Mammalia</taxon>
        <taxon>Eutheria</taxon>
        <taxon>Euarchontoglires</taxon>
        <taxon>Glires</taxon>
        <taxon>Lagomorpha</taxon>
        <taxon>Leporidae</taxon>
        <taxon>Oryctolagus</taxon>
    </lineage>
</organism>
<protein>
    <recommendedName>
        <fullName>Guanine nucleotide-binding protein subunit alpha-15</fullName>
        <shortName>G alpha-15</shortName>
        <shortName>G-protein subunit alpha-15</shortName>
    </recommendedName>
</protein>
<reference key="1">
    <citation type="journal article" date="1999" name="FEBS Lett.">
        <title>Cloning and characterization of a rabbit ortholog of human Galpha16 and mouse Galpha15.</title>
        <authorList>
            <person name="Feild J.A."/>
            <person name="Foley J.J."/>
            <person name="Testa T.T."/>
            <person name="Nuthulaganti P."/>
            <person name="Ellis C."/>
            <person name="Sarau H.M."/>
            <person name="Ames R.S."/>
        </authorList>
    </citation>
    <scope>NUCLEOTIDE SEQUENCE [MRNA]</scope>
    <scope>FUNCTION</scope>
    <source>
        <tissue>Spleen</tissue>
    </source>
</reference>